<comment type="function">
    <text evidence="1">Globally modulates RNA abundance by binding to RNase E (Rne) and regulating its endonucleolytic activity. Can modulate Rne action in a substrate-dependent manner by altering the composition of the degradosome. Modulates RNA-binding and helicase activities of the degradosome.</text>
</comment>
<comment type="subunit">
    <text evidence="1">Homotrimer. Binds to both RNA-binding sites in the C-terminal region of Rne and to RhlB.</text>
</comment>
<comment type="subcellular location">
    <subcellularLocation>
        <location evidence="1">Cytoplasm</location>
    </subcellularLocation>
</comment>
<comment type="similarity">
    <text evidence="1">Belongs to the RraA family.</text>
</comment>
<evidence type="ECO:0000255" key="1">
    <source>
        <dbReference type="HAMAP-Rule" id="MF_00471"/>
    </source>
</evidence>
<reference key="1">
    <citation type="journal article" date="2003" name="Genome Res.">
        <title>Comparative genome analysis of Vibrio vulnificus, a marine pathogen.</title>
        <authorList>
            <person name="Chen C.-Y."/>
            <person name="Wu K.-M."/>
            <person name="Chang Y.-C."/>
            <person name="Chang C.-H."/>
            <person name="Tsai H.-C."/>
            <person name="Liao T.-L."/>
            <person name="Liu Y.-M."/>
            <person name="Chen H.-J."/>
            <person name="Shen A.B.-T."/>
            <person name="Li J.-C."/>
            <person name="Su T.-L."/>
            <person name="Shao C.-P."/>
            <person name="Lee C.-T."/>
            <person name="Hor L.-I."/>
            <person name="Tsai S.-F."/>
        </authorList>
    </citation>
    <scope>NUCLEOTIDE SEQUENCE [LARGE SCALE GENOMIC DNA]</scope>
    <source>
        <strain>YJ016</strain>
    </source>
</reference>
<keyword id="KW-0963">Cytoplasm</keyword>
<protein>
    <recommendedName>
        <fullName evidence="1">Regulator of ribonuclease activity A</fullName>
    </recommendedName>
</protein>
<name>RRAA_VIBVY</name>
<accession>Q7MH54</accession>
<sequence length="173" mass="18760">MEYNTSALCDIYMDQVDVVEPMFSNFGGRASFAGQITTVKCFEDNALIRETLEQDGVGRVLLVDGGGSLRRALLDGELAAIAEENEWEGIVVYGCVREVDELEDMNIGIQALASIPVSAAMQGVGEVDVPVNFGGVTFLPEDYLYADTTGIILSQEPLSADLEEDEEEPELLD</sequence>
<gene>
    <name evidence="1" type="primary">rraA</name>
    <name type="ordered locus">VV3018</name>
</gene>
<proteinExistence type="inferred from homology"/>
<feature type="chain" id="PRO_0000209647" description="Regulator of ribonuclease activity A">
    <location>
        <begin position="1"/>
        <end position="173"/>
    </location>
</feature>
<dbReference type="EMBL" id="BA000037">
    <property type="protein sequence ID" value="BAC95782.1"/>
    <property type="molecule type" value="Genomic_DNA"/>
</dbReference>
<dbReference type="RefSeq" id="WP_011151296.1">
    <property type="nucleotide sequence ID" value="NC_005139.1"/>
</dbReference>
<dbReference type="SMR" id="Q7MH54"/>
<dbReference type="STRING" id="672.VV93_v1c27460"/>
<dbReference type="KEGG" id="vvy:VV3018"/>
<dbReference type="PATRIC" id="fig|196600.6.peg.2995"/>
<dbReference type="eggNOG" id="COG0684">
    <property type="taxonomic scope" value="Bacteria"/>
</dbReference>
<dbReference type="HOGENOM" id="CLU_072626_4_0_6"/>
<dbReference type="Proteomes" id="UP000002675">
    <property type="component" value="Chromosome I"/>
</dbReference>
<dbReference type="GO" id="GO:0005737">
    <property type="term" value="C:cytoplasm"/>
    <property type="evidence" value="ECO:0007669"/>
    <property type="project" value="UniProtKB-SubCell"/>
</dbReference>
<dbReference type="GO" id="GO:0060698">
    <property type="term" value="F:endoribonuclease inhibitor activity"/>
    <property type="evidence" value="ECO:0007669"/>
    <property type="project" value="UniProtKB-UniRule"/>
</dbReference>
<dbReference type="GO" id="GO:0019899">
    <property type="term" value="F:enzyme binding"/>
    <property type="evidence" value="ECO:0007669"/>
    <property type="project" value="UniProtKB-UniRule"/>
</dbReference>
<dbReference type="GO" id="GO:0051252">
    <property type="term" value="P:regulation of RNA metabolic process"/>
    <property type="evidence" value="ECO:0007669"/>
    <property type="project" value="InterPro"/>
</dbReference>
<dbReference type="CDD" id="cd16841">
    <property type="entry name" value="RraA_family"/>
    <property type="match status" value="1"/>
</dbReference>
<dbReference type="Gene3D" id="3.50.30.40">
    <property type="entry name" value="Ribonuclease E inhibitor RraA/RraA-like"/>
    <property type="match status" value="1"/>
</dbReference>
<dbReference type="HAMAP" id="MF_00471">
    <property type="entry name" value="RraA"/>
    <property type="match status" value="1"/>
</dbReference>
<dbReference type="InterPro" id="IPR010203">
    <property type="entry name" value="RraA"/>
</dbReference>
<dbReference type="InterPro" id="IPR005493">
    <property type="entry name" value="RraA/RraA-like"/>
</dbReference>
<dbReference type="InterPro" id="IPR036704">
    <property type="entry name" value="RraA/RraA-like_sf"/>
</dbReference>
<dbReference type="InterPro" id="IPR014339">
    <property type="entry name" value="RraA_gpbac"/>
</dbReference>
<dbReference type="NCBIfam" id="TIGR01935">
    <property type="entry name" value="NOT-MenG"/>
    <property type="match status" value="1"/>
</dbReference>
<dbReference type="NCBIfam" id="NF006875">
    <property type="entry name" value="PRK09372.1"/>
    <property type="match status" value="1"/>
</dbReference>
<dbReference type="NCBIfam" id="TIGR02998">
    <property type="entry name" value="RraA_entero"/>
    <property type="match status" value="1"/>
</dbReference>
<dbReference type="PANTHER" id="PTHR33254">
    <property type="entry name" value="4-HYDROXY-4-METHYL-2-OXOGLUTARATE ALDOLASE 3-RELATED"/>
    <property type="match status" value="1"/>
</dbReference>
<dbReference type="PANTHER" id="PTHR33254:SF29">
    <property type="entry name" value="REGULATOR OF RIBONUCLEASE ACTIVITY A"/>
    <property type="match status" value="1"/>
</dbReference>
<dbReference type="Pfam" id="PF03737">
    <property type="entry name" value="RraA-like"/>
    <property type="match status" value="1"/>
</dbReference>
<dbReference type="SUPFAM" id="SSF89562">
    <property type="entry name" value="RraA-like"/>
    <property type="match status" value="1"/>
</dbReference>
<organism>
    <name type="scientific">Vibrio vulnificus (strain YJ016)</name>
    <dbReference type="NCBI Taxonomy" id="196600"/>
    <lineage>
        <taxon>Bacteria</taxon>
        <taxon>Pseudomonadati</taxon>
        <taxon>Pseudomonadota</taxon>
        <taxon>Gammaproteobacteria</taxon>
        <taxon>Vibrionales</taxon>
        <taxon>Vibrionaceae</taxon>
        <taxon>Vibrio</taxon>
    </lineage>
</organism>